<evidence type="ECO:0000255" key="1">
    <source>
        <dbReference type="HAMAP-Rule" id="MF_00491"/>
    </source>
</evidence>
<comment type="function">
    <text evidence="1">NDH-1 shuttles electrons from NAD(P)H, via FMN and iron-sulfur (Fe-S) centers, to quinones in the respiratory chain. The immediate electron acceptor for the enzyme in this species is believed to be plastoquinone. Couples the redox reaction to proton translocation (for every two electrons transferred, four hydrogen ions are translocated across the cytoplasmic membrane), and thus conserves the redox energy in a proton gradient.</text>
</comment>
<comment type="catalytic activity">
    <reaction evidence="1">
        <text>a plastoquinone + NADH + (n+1) H(+)(in) = a plastoquinol + NAD(+) + n H(+)(out)</text>
        <dbReference type="Rhea" id="RHEA:42608"/>
        <dbReference type="Rhea" id="RHEA-COMP:9561"/>
        <dbReference type="Rhea" id="RHEA-COMP:9562"/>
        <dbReference type="ChEBI" id="CHEBI:15378"/>
        <dbReference type="ChEBI" id="CHEBI:17757"/>
        <dbReference type="ChEBI" id="CHEBI:57540"/>
        <dbReference type="ChEBI" id="CHEBI:57945"/>
        <dbReference type="ChEBI" id="CHEBI:62192"/>
    </reaction>
</comment>
<comment type="catalytic activity">
    <reaction evidence="1">
        <text>a plastoquinone + NADPH + (n+1) H(+)(in) = a plastoquinol + NADP(+) + n H(+)(out)</text>
        <dbReference type="Rhea" id="RHEA:42612"/>
        <dbReference type="Rhea" id="RHEA-COMP:9561"/>
        <dbReference type="Rhea" id="RHEA-COMP:9562"/>
        <dbReference type="ChEBI" id="CHEBI:15378"/>
        <dbReference type="ChEBI" id="CHEBI:17757"/>
        <dbReference type="ChEBI" id="CHEBI:57783"/>
        <dbReference type="ChEBI" id="CHEBI:58349"/>
        <dbReference type="ChEBI" id="CHEBI:62192"/>
    </reaction>
</comment>
<comment type="subcellular location">
    <subcellularLocation>
        <location evidence="1">Cellular thylakoid membrane</location>
        <topology evidence="1">Multi-pass membrane protein</topology>
    </subcellularLocation>
</comment>
<comment type="similarity">
    <text evidence="1">Belongs to the complex I subunit 4 family.</text>
</comment>
<reference key="1">
    <citation type="submission" date="2008-02" db="EMBL/GenBank/DDBJ databases">
        <title>Complete sequence of Synechococcus sp. PCC 7002.</title>
        <authorList>
            <person name="Li T."/>
            <person name="Zhao J."/>
            <person name="Zhao C."/>
            <person name="Liu Z."/>
            <person name="Zhao F."/>
            <person name="Marquardt J."/>
            <person name="Nomura C.T."/>
            <person name="Persson S."/>
            <person name="Detter J.C."/>
            <person name="Richardson P.M."/>
            <person name="Lanz C."/>
            <person name="Schuster S.C."/>
            <person name="Wang J."/>
            <person name="Li S."/>
            <person name="Huang X."/>
            <person name="Cai T."/>
            <person name="Yu Z."/>
            <person name="Luo J."/>
            <person name="Zhao J."/>
            <person name="Bryant D.A."/>
        </authorList>
    </citation>
    <scope>NUCLEOTIDE SEQUENCE [LARGE SCALE GENOMIC DNA]</scope>
    <source>
        <strain>ATCC 27264 / PCC 7002 / PR-6</strain>
    </source>
</reference>
<dbReference type="EC" id="7.1.1.-" evidence="1"/>
<dbReference type="EMBL" id="CP000951">
    <property type="protein sequence ID" value="ACA99960.1"/>
    <property type="molecule type" value="Genomic_DNA"/>
</dbReference>
<dbReference type="RefSeq" id="WP_012307583.1">
    <property type="nucleotide sequence ID" value="NZ_JAHHPU010000002.1"/>
</dbReference>
<dbReference type="SMR" id="B1XHP2"/>
<dbReference type="STRING" id="32049.SYNPCC7002_A1973"/>
<dbReference type="KEGG" id="syp:SYNPCC7002_A1973"/>
<dbReference type="eggNOG" id="COG1008">
    <property type="taxonomic scope" value="Bacteria"/>
</dbReference>
<dbReference type="HOGENOM" id="CLU_007100_4_0_3"/>
<dbReference type="Proteomes" id="UP000001688">
    <property type="component" value="Chromosome"/>
</dbReference>
<dbReference type="GO" id="GO:0031676">
    <property type="term" value="C:plasma membrane-derived thylakoid membrane"/>
    <property type="evidence" value="ECO:0007669"/>
    <property type="project" value="UniProtKB-SubCell"/>
</dbReference>
<dbReference type="GO" id="GO:0008137">
    <property type="term" value="F:NADH dehydrogenase (ubiquinone) activity"/>
    <property type="evidence" value="ECO:0007669"/>
    <property type="project" value="InterPro"/>
</dbReference>
<dbReference type="GO" id="GO:0048039">
    <property type="term" value="F:ubiquinone binding"/>
    <property type="evidence" value="ECO:0007669"/>
    <property type="project" value="TreeGrafter"/>
</dbReference>
<dbReference type="GO" id="GO:0042773">
    <property type="term" value="P:ATP synthesis coupled electron transport"/>
    <property type="evidence" value="ECO:0007669"/>
    <property type="project" value="InterPro"/>
</dbReference>
<dbReference type="GO" id="GO:0015990">
    <property type="term" value="P:electron transport coupled proton transport"/>
    <property type="evidence" value="ECO:0007669"/>
    <property type="project" value="TreeGrafter"/>
</dbReference>
<dbReference type="HAMAP" id="MF_00491">
    <property type="entry name" value="NDH1_NuoM"/>
    <property type="match status" value="1"/>
</dbReference>
<dbReference type="InterPro" id="IPR000260">
    <property type="entry name" value="NADH4_N"/>
</dbReference>
<dbReference type="InterPro" id="IPR022997">
    <property type="entry name" value="NADH_Q_OxRdtase_chain4"/>
</dbReference>
<dbReference type="InterPro" id="IPR010227">
    <property type="entry name" value="NADH_Q_OxRdtase_chainM/4"/>
</dbReference>
<dbReference type="InterPro" id="IPR003918">
    <property type="entry name" value="NADH_UbQ_OxRdtase"/>
</dbReference>
<dbReference type="InterPro" id="IPR001750">
    <property type="entry name" value="ND/Mrp_TM"/>
</dbReference>
<dbReference type="NCBIfam" id="TIGR01972">
    <property type="entry name" value="NDH_I_M"/>
    <property type="match status" value="1"/>
</dbReference>
<dbReference type="NCBIfam" id="NF009212">
    <property type="entry name" value="PRK12561.1"/>
    <property type="match status" value="1"/>
</dbReference>
<dbReference type="PANTHER" id="PTHR43507:SF21">
    <property type="entry name" value="NAD(P)H-QUINONE OXIDOREDUCTASE CHAIN 4, CHLOROPLASTIC"/>
    <property type="match status" value="1"/>
</dbReference>
<dbReference type="PANTHER" id="PTHR43507">
    <property type="entry name" value="NADH-UBIQUINONE OXIDOREDUCTASE CHAIN 4"/>
    <property type="match status" value="1"/>
</dbReference>
<dbReference type="Pfam" id="PF01059">
    <property type="entry name" value="Oxidored_q5_N"/>
    <property type="match status" value="1"/>
</dbReference>
<dbReference type="Pfam" id="PF00361">
    <property type="entry name" value="Proton_antipo_M"/>
    <property type="match status" value="1"/>
</dbReference>
<dbReference type="PRINTS" id="PR01437">
    <property type="entry name" value="NUOXDRDTASE4"/>
</dbReference>
<gene>
    <name evidence="1" type="primary">ndhD1</name>
    <name type="ordered locus">SYNPCC7002_A1973</name>
</gene>
<keyword id="KW-0472">Membrane</keyword>
<keyword id="KW-0520">NAD</keyword>
<keyword id="KW-0521">NADP</keyword>
<keyword id="KW-0618">Plastoquinone</keyword>
<keyword id="KW-0874">Quinone</keyword>
<keyword id="KW-1185">Reference proteome</keyword>
<keyword id="KW-0793">Thylakoid</keyword>
<keyword id="KW-1278">Translocase</keyword>
<keyword id="KW-0812">Transmembrane</keyword>
<keyword id="KW-1133">Transmembrane helix</keyword>
<name>NU4C1_PICP2</name>
<feature type="chain" id="PRO_0000343250" description="NAD(P)H-quinone oxidoreductase chain 4 1">
    <location>
        <begin position="1"/>
        <end position="534"/>
    </location>
</feature>
<feature type="transmembrane region" description="Helical" evidence="1">
    <location>
        <begin position="6"/>
        <end position="26"/>
    </location>
</feature>
<feature type="transmembrane region" description="Helical" evidence="1">
    <location>
        <begin position="34"/>
        <end position="54"/>
    </location>
</feature>
<feature type="transmembrane region" description="Helical" evidence="1">
    <location>
        <begin position="87"/>
        <end position="107"/>
    </location>
</feature>
<feature type="transmembrane region" description="Helical" evidence="1">
    <location>
        <begin position="113"/>
        <end position="133"/>
    </location>
</feature>
<feature type="transmembrane region" description="Helical" evidence="1">
    <location>
        <begin position="136"/>
        <end position="156"/>
    </location>
</feature>
<feature type="transmembrane region" description="Helical" evidence="1">
    <location>
        <begin position="169"/>
        <end position="189"/>
    </location>
</feature>
<feature type="transmembrane region" description="Helical" evidence="1">
    <location>
        <begin position="209"/>
        <end position="229"/>
    </location>
</feature>
<feature type="transmembrane region" description="Helical" evidence="1">
    <location>
        <begin position="243"/>
        <end position="263"/>
    </location>
</feature>
<feature type="transmembrane region" description="Helical" evidence="1">
    <location>
        <begin position="277"/>
        <end position="297"/>
    </location>
</feature>
<feature type="transmembrane region" description="Helical" evidence="1">
    <location>
        <begin position="311"/>
        <end position="331"/>
    </location>
</feature>
<feature type="transmembrane region" description="Helical" evidence="1">
    <location>
        <begin position="332"/>
        <end position="352"/>
    </location>
</feature>
<feature type="transmembrane region" description="Helical" evidence="1">
    <location>
        <begin position="376"/>
        <end position="396"/>
    </location>
</feature>
<feature type="transmembrane region" description="Helical" evidence="1">
    <location>
        <begin position="418"/>
        <end position="438"/>
    </location>
</feature>
<feature type="transmembrane region" description="Helical" evidence="1">
    <location>
        <begin position="464"/>
        <end position="484"/>
    </location>
</feature>
<protein>
    <recommendedName>
        <fullName evidence="1">NAD(P)H-quinone oxidoreductase chain 4 1</fullName>
        <ecNumber evidence="1">7.1.1.-</ecNumber>
    </recommendedName>
    <alternativeName>
        <fullName evidence="1">NAD(P)H dehydrogenase I, chain 4 1</fullName>
    </alternativeName>
    <alternativeName>
        <fullName evidence="1">NDH-1, chain 4 1</fullName>
    </alternativeName>
</protein>
<sequence length="534" mass="57894">MDSLQIPWLTTAIAFPLLAALVIPLIPDKEGKTIRWYTLGVALTDFALLVTAFWQNYDLGRTEFQLTENFAWIPQLGLNWSLGVDGLSMPLIILATLITTLATLAAWNVTKKPKLFAGLILVMLSAQIGVFAVQDLLLFFIMWELELVPVYLLISIWGGKKRLYAATKFILYTALGSVFILASTLALAFYGGDVTFDMQALGLKDYPLALELLAYAGFLIGFGVKLPIFPLHTWLPDAHSEASAPVSMILAGVLLKMGGYGLIRLNMEMLPDAHIRFAPLLIVLGIVNIVYGALTAFGQTNLKRRLASSSISHMGFVLVGIASFTDLGMNGAVLQMLSHGFIAAALFFLSGVTYERTHTLMMDEMSGIARLMPKTFAMFTAAAMASLALPGMSGFVSELTVFLGLSNSDAYSYGFKAIAIFLTAVGVILTPIYLLSMLREVFYGKGSQAPLSLAAGEDAKPREIFVAVCLLAPIIAIGLYPKLATTTYDLKTVEVASKVRAALPLYAEQLPQNGDRQAQMGLSSQMPALIAPRF</sequence>
<organism>
    <name type="scientific">Picosynechococcus sp. (strain ATCC 27264 / PCC 7002 / PR-6)</name>
    <name type="common">Agmenellum quadruplicatum</name>
    <dbReference type="NCBI Taxonomy" id="32049"/>
    <lineage>
        <taxon>Bacteria</taxon>
        <taxon>Bacillati</taxon>
        <taxon>Cyanobacteriota</taxon>
        <taxon>Cyanophyceae</taxon>
        <taxon>Oscillatoriophycideae</taxon>
        <taxon>Chroococcales</taxon>
        <taxon>Geminocystaceae</taxon>
        <taxon>Picosynechococcus</taxon>
    </lineage>
</organism>
<proteinExistence type="inferred from homology"/>
<accession>B1XHP2</accession>